<keyword id="KW-0007">Acetylation</keyword>
<keyword id="KW-0067">ATP-binding</keyword>
<keyword id="KW-0963">Cytoplasm</keyword>
<keyword id="KW-0903">Direct protein sequencing</keyword>
<keyword id="KW-0418">Kinase</keyword>
<keyword id="KW-0547">Nucleotide-binding</keyword>
<keyword id="KW-0597">Phosphoprotein</keyword>
<keyword id="KW-1185">Reference proteome</keyword>
<keyword id="KW-0808">Transferase</keyword>
<dbReference type="EC" id="2.7.4.3" evidence="1 3"/>
<dbReference type="EC" id="2.7.4.4" evidence="1"/>
<dbReference type="EC" id="2.7.4.6" evidence="1 3"/>
<dbReference type="PIR" id="A00680">
    <property type="entry name" value="KIRBA"/>
</dbReference>
<dbReference type="BMRB" id="P00569"/>
<dbReference type="SMR" id="P00569"/>
<dbReference type="FunCoup" id="P00569">
    <property type="interactions" value="43"/>
</dbReference>
<dbReference type="STRING" id="9986.ENSOCUP00000040457"/>
<dbReference type="BindingDB" id="P00569"/>
<dbReference type="ChEMBL" id="CHEMBL5709"/>
<dbReference type="iPTMnet" id="P00569"/>
<dbReference type="PaxDb" id="9986-ENSOCUP00000004478"/>
<dbReference type="eggNOG" id="KOG3079">
    <property type="taxonomic scope" value="Eukaryota"/>
</dbReference>
<dbReference type="InParanoid" id="P00569"/>
<dbReference type="SABIO-RK" id="P00569"/>
<dbReference type="Proteomes" id="UP000001811">
    <property type="component" value="Unplaced"/>
</dbReference>
<dbReference type="GO" id="GO:0005737">
    <property type="term" value="C:cytoplasm"/>
    <property type="evidence" value="ECO:0007669"/>
    <property type="project" value="UniProtKB-SubCell"/>
</dbReference>
<dbReference type="GO" id="GO:0004017">
    <property type="term" value="F:adenylate kinase activity"/>
    <property type="evidence" value="ECO:0007669"/>
    <property type="project" value="UniProtKB-UniRule"/>
</dbReference>
<dbReference type="GO" id="GO:0005524">
    <property type="term" value="F:ATP binding"/>
    <property type="evidence" value="ECO:0007669"/>
    <property type="project" value="UniProtKB-KW"/>
</dbReference>
<dbReference type="GO" id="GO:0047506">
    <property type="term" value="F:deoxyadenylate kinase activity"/>
    <property type="evidence" value="ECO:0007669"/>
    <property type="project" value="RHEA"/>
</dbReference>
<dbReference type="GO" id="GO:0004550">
    <property type="term" value="F:nucleoside diphosphate kinase activity"/>
    <property type="evidence" value="ECO:0000250"/>
    <property type="project" value="UniProtKB"/>
</dbReference>
<dbReference type="GO" id="GO:0006172">
    <property type="term" value="P:ADP biosynthetic process"/>
    <property type="evidence" value="ECO:0007669"/>
    <property type="project" value="UniProtKB-UniRule"/>
</dbReference>
<dbReference type="GO" id="GO:0046033">
    <property type="term" value="P:AMP metabolic process"/>
    <property type="evidence" value="ECO:0007669"/>
    <property type="project" value="UniProtKB-UniRule"/>
</dbReference>
<dbReference type="GO" id="GO:0046034">
    <property type="term" value="P:ATP metabolic process"/>
    <property type="evidence" value="ECO:0007669"/>
    <property type="project" value="UniProtKB-UniRule"/>
</dbReference>
<dbReference type="GO" id="GO:0009142">
    <property type="term" value="P:nucleoside triphosphate biosynthetic process"/>
    <property type="evidence" value="ECO:0007669"/>
    <property type="project" value="InterPro"/>
</dbReference>
<dbReference type="CDD" id="cd01428">
    <property type="entry name" value="ADK"/>
    <property type="match status" value="1"/>
</dbReference>
<dbReference type="FunFam" id="3.40.50.300:FF:000315">
    <property type="entry name" value="Adenylate kinase 1"/>
    <property type="match status" value="1"/>
</dbReference>
<dbReference type="Gene3D" id="3.40.50.300">
    <property type="entry name" value="P-loop containing nucleotide triphosphate hydrolases"/>
    <property type="match status" value="1"/>
</dbReference>
<dbReference type="HAMAP" id="MF_00235">
    <property type="entry name" value="Adenylate_kinase_Adk"/>
    <property type="match status" value="1"/>
</dbReference>
<dbReference type="HAMAP" id="MF_03171">
    <property type="entry name" value="Adenylate_kinase_AK1"/>
    <property type="match status" value="1"/>
</dbReference>
<dbReference type="InterPro" id="IPR000850">
    <property type="entry name" value="Adenylat/UMP-CMP_kin"/>
</dbReference>
<dbReference type="InterPro" id="IPR033690">
    <property type="entry name" value="Adenylat_kinase_CS"/>
</dbReference>
<dbReference type="InterPro" id="IPR028582">
    <property type="entry name" value="AK1"/>
</dbReference>
<dbReference type="InterPro" id="IPR006267">
    <property type="entry name" value="AK1/5"/>
</dbReference>
<dbReference type="InterPro" id="IPR027417">
    <property type="entry name" value="P-loop_NTPase"/>
</dbReference>
<dbReference type="NCBIfam" id="TIGR01360">
    <property type="entry name" value="aden_kin_iso1"/>
    <property type="match status" value="1"/>
</dbReference>
<dbReference type="NCBIfam" id="NF011100">
    <property type="entry name" value="PRK14527.1"/>
    <property type="match status" value="1"/>
</dbReference>
<dbReference type="PANTHER" id="PTHR23359">
    <property type="entry name" value="NUCLEOTIDE KINASE"/>
    <property type="match status" value="1"/>
</dbReference>
<dbReference type="Pfam" id="PF00406">
    <property type="entry name" value="ADK"/>
    <property type="match status" value="1"/>
</dbReference>
<dbReference type="PRINTS" id="PR00094">
    <property type="entry name" value="ADENYLTKNASE"/>
</dbReference>
<dbReference type="SUPFAM" id="SSF52540">
    <property type="entry name" value="P-loop containing nucleoside triphosphate hydrolases"/>
    <property type="match status" value="1"/>
</dbReference>
<dbReference type="PROSITE" id="PS00113">
    <property type="entry name" value="ADENYLATE_KINASE"/>
    <property type="match status" value="1"/>
</dbReference>
<gene>
    <name evidence="3" type="primary">AK1</name>
</gene>
<sequence length="194" mass="21638">MEEKLKKAKIIFVVGGPGSGKGTQCEKIVHKYGYTHLSTGDLLRAEVSSGSARGKKLSEIMEKGQLVPLETVLDMLRDAMVAKADTSKGFLIDGYPRQVQQGEEFERRIAQPTLLLYVDAGPETMQKRLLKRGETSGRVDDNEETIKKRLETYYKATEPVIAFYEKRGIVRKVNAEGSVDNVFSQVCTHLDALK</sequence>
<evidence type="ECO:0000250" key="1">
    <source>
        <dbReference type="UniProtKB" id="P00568"/>
    </source>
</evidence>
<evidence type="ECO:0000250" key="2">
    <source>
        <dbReference type="UniProtKB" id="P05081"/>
    </source>
</evidence>
<evidence type="ECO:0000255" key="3">
    <source>
        <dbReference type="HAMAP-Rule" id="MF_03171"/>
    </source>
</evidence>
<evidence type="ECO:0000269" key="4">
    <source>
    </source>
</evidence>
<protein>
    <recommendedName>
        <fullName evidence="3">Adenylate kinase isoenzyme 1</fullName>
        <shortName evidence="3">AK 1</shortName>
        <ecNumber evidence="1 3">2.7.4.3</ecNumber>
        <ecNumber evidence="1">2.7.4.4</ecNumber>
        <ecNumber evidence="1 3">2.7.4.6</ecNumber>
    </recommendedName>
    <alternativeName>
        <fullName evidence="3">ATP-AMP transphosphorylase 1</fullName>
    </alternativeName>
    <alternativeName>
        <fullName evidence="3">ATP:AMP phosphotransferase</fullName>
    </alternativeName>
    <alternativeName>
        <fullName evidence="3">Adenylate monophosphate kinase</fullName>
    </alternativeName>
    <alternativeName>
        <fullName evidence="3">Myokinase</fullName>
    </alternativeName>
</protein>
<comment type="function">
    <text evidence="1 2 3">Catalyzes the reversible transfer of the terminal phosphate group between ATP and AMP. Also displays broad nucleoside diphosphate kinase activity. Plays an important role in cellular energy homeostasis and in adenine nucleotide metabolism (By similarity). Also catalyzes at a very low rate the synthesis of thiamine triphosphate (ThTP) from thiamine diphosphate (ThDP) and ADP (By similarity).</text>
</comment>
<comment type="catalytic activity">
    <reaction evidence="1">
        <text>a ribonucleoside 5'-phosphate + ATP = a ribonucleoside 5'-diphosphate + ADP</text>
        <dbReference type="Rhea" id="RHEA:24036"/>
        <dbReference type="ChEBI" id="CHEBI:30616"/>
        <dbReference type="ChEBI" id="CHEBI:57930"/>
        <dbReference type="ChEBI" id="CHEBI:58043"/>
        <dbReference type="ChEBI" id="CHEBI:456216"/>
        <dbReference type="EC" id="2.7.4.4"/>
    </reaction>
</comment>
<comment type="catalytic activity">
    <reaction evidence="1 3">
        <text>AMP + ATP = 2 ADP</text>
        <dbReference type="Rhea" id="RHEA:12973"/>
        <dbReference type="ChEBI" id="CHEBI:30616"/>
        <dbReference type="ChEBI" id="CHEBI:456215"/>
        <dbReference type="ChEBI" id="CHEBI:456216"/>
        <dbReference type="EC" id="2.7.4.3"/>
    </reaction>
</comment>
<comment type="catalytic activity">
    <reaction evidence="1">
        <text>dAMP + ATP = dADP + ADP</text>
        <dbReference type="Rhea" id="RHEA:23100"/>
        <dbReference type="ChEBI" id="CHEBI:30616"/>
        <dbReference type="ChEBI" id="CHEBI:57667"/>
        <dbReference type="ChEBI" id="CHEBI:58245"/>
        <dbReference type="ChEBI" id="CHEBI:456216"/>
    </reaction>
</comment>
<comment type="catalytic activity">
    <reaction evidence="2">
        <text>dATP + AMP = dADP + ADP</text>
        <dbReference type="Rhea" id="RHEA:79899"/>
        <dbReference type="ChEBI" id="CHEBI:57667"/>
        <dbReference type="ChEBI" id="CHEBI:61404"/>
        <dbReference type="ChEBI" id="CHEBI:456215"/>
        <dbReference type="ChEBI" id="CHEBI:456216"/>
    </reaction>
</comment>
<comment type="catalytic activity">
    <reaction evidence="2">
        <text>dAMP + dATP = 2 dADP</text>
        <dbReference type="Rhea" id="RHEA:78311"/>
        <dbReference type="ChEBI" id="CHEBI:57667"/>
        <dbReference type="ChEBI" id="CHEBI:58245"/>
        <dbReference type="ChEBI" id="CHEBI:61404"/>
    </reaction>
</comment>
<comment type="catalytic activity">
    <reaction evidence="1 3">
        <text>a 2'-deoxyribonucleoside 5'-diphosphate + ATP = a 2'-deoxyribonucleoside 5'-triphosphate + ADP</text>
        <dbReference type="Rhea" id="RHEA:44640"/>
        <dbReference type="ChEBI" id="CHEBI:30616"/>
        <dbReference type="ChEBI" id="CHEBI:61560"/>
        <dbReference type="ChEBI" id="CHEBI:73316"/>
        <dbReference type="ChEBI" id="CHEBI:456216"/>
        <dbReference type="EC" id="2.7.4.6"/>
    </reaction>
</comment>
<comment type="catalytic activity">
    <reaction evidence="1">
        <text>a ribonucleoside 5'-diphosphate + ATP = a ribonucleoside 5'-triphosphate + ADP</text>
        <dbReference type="Rhea" id="RHEA:18113"/>
        <dbReference type="ChEBI" id="CHEBI:30616"/>
        <dbReference type="ChEBI" id="CHEBI:57930"/>
        <dbReference type="ChEBI" id="CHEBI:61557"/>
        <dbReference type="ChEBI" id="CHEBI:456216"/>
        <dbReference type="EC" id="2.7.4.6"/>
    </reaction>
</comment>
<comment type="catalytic activity">
    <reaction evidence="1">
        <text>CDP + GTP = CTP + GDP</text>
        <dbReference type="Rhea" id="RHEA:79859"/>
        <dbReference type="ChEBI" id="CHEBI:37563"/>
        <dbReference type="ChEBI" id="CHEBI:37565"/>
        <dbReference type="ChEBI" id="CHEBI:58069"/>
        <dbReference type="ChEBI" id="CHEBI:58189"/>
    </reaction>
</comment>
<comment type="catalytic activity">
    <reaction evidence="1">
        <text>GDP + ATP = GTP + ADP</text>
        <dbReference type="Rhea" id="RHEA:27686"/>
        <dbReference type="ChEBI" id="CHEBI:30616"/>
        <dbReference type="ChEBI" id="CHEBI:37565"/>
        <dbReference type="ChEBI" id="CHEBI:58189"/>
        <dbReference type="ChEBI" id="CHEBI:456216"/>
        <dbReference type="EC" id="2.7.4.6"/>
    </reaction>
</comment>
<comment type="catalytic activity">
    <reaction evidence="1">
        <text>UDP + ATP = UTP + ADP</text>
        <dbReference type="Rhea" id="RHEA:25098"/>
        <dbReference type="ChEBI" id="CHEBI:30616"/>
        <dbReference type="ChEBI" id="CHEBI:46398"/>
        <dbReference type="ChEBI" id="CHEBI:58223"/>
        <dbReference type="ChEBI" id="CHEBI:456216"/>
        <dbReference type="EC" id="2.7.4.6"/>
    </reaction>
</comment>
<comment type="catalytic activity">
    <reaction evidence="1">
        <text>GTP + UDP = UTP + GDP</text>
        <dbReference type="Rhea" id="RHEA:79863"/>
        <dbReference type="ChEBI" id="CHEBI:37565"/>
        <dbReference type="ChEBI" id="CHEBI:46398"/>
        <dbReference type="ChEBI" id="CHEBI:58189"/>
        <dbReference type="ChEBI" id="CHEBI:58223"/>
    </reaction>
</comment>
<comment type="catalytic activity">
    <reaction evidence="1">
        <text>dTDP + GTP = dTTP + GDP</text>
        <dbReference type="Rhea" id="RHEA:79867"/>
        <dbReference type="ChEBI" id="CHEBI:37565"/>
        <dbReference type="ChEBI" id="CHEBI:37568"/>
        <dbReference type="ChEBI" id="CHEBI:58189"/>
        <dbReference type="ChEBI" id="CHEBI:58369"/>
    </reaction>
</comment>
<comment type="catalytic activity">
    <reaction evidence="1">
        <text>dCDP + GTP = dCTP + GDP</text>
        <dbReference type="Rhea" id="RHEA:79875"/>
        <dbReference type="ChEBI" id="CHEBI:37565"/>
        <dbReference type="ChEBI" id="CHEBI:58189"/>
        <dbReference type="ChEBI" id="CHEBI:58593"/>
        <dbReference type="ChEBI" id="CHEBI:61481"/>
    </reaction>
</comment>
<comment type="catalytic activity">
    <reaction evidence="1">
        <text>dGDP + ATP = dGTP + ADP</text>
        <dbReference type="Rhea" id="RHEA:27690"/>
        <dbReference type="ChEBI" id="CHEBI:30616"/>
        <dbReference type="ChEBI" id="CHEBI:58595"/>
        <dbReference type="ChEBI" id="CHEBI:61429"/>
        <dbReference type="ChEBI" id="CHEBI:456216"/>
        <dbReference type="EC" id="2.7.4.6"/>
    </reaction>
</comment>
<comment type="catalytic activity">
    <reaction evidence="1">
        <text>dADP + GTP = dATP + GDP</text>
        <dbReference type="Rhea" id="RHEA:79871"/>
        <dbReference type="ChEBI" id="CHEBI:37565"/>
        <dbReference type="ChEBI" id="CHEBI:57667"/>
        <dbReference type="ChEBI" id="CHEBI:58189"/>
        <dbReference type="ChEBI" id="CHEBI:61404"/>
    </reaction>
</comment>
<comment type="catalytic activity">
    <reaction evidence="2">
        <text>thiamine diphosphate + ADP = thiamine triphosphate + AMP</text>
        <dbReference type="Rhea" id="RHEA:69180"/>
        <dbReference type="ChEBI" id="CHEBI:58937"/>
        <dbReference type="ChEBI" id="CHEBI:58938"/>
        <dbReference type="ChEBI" id="CHEBI:456215"/>
        <dbReference type="ChEBI" id="CHEBI:456216"/>
    </reaction>
</comment>
<comment type="cofactor">
    <cofactor evidence="2">
        <name>Mg(2+)</name>
        <dbReference type="ChEBI" id="CHEBI:18420"/>
    </cofactor>
</comment>
<comment type="subunit">
    <text evidence="1 3">Monomer.</text>
</comment>
<comment type="subcellular location">
    <subcellularLocation>
        <location evidence="1 3">Cytoplasm</location>
    </subcellularLocation>
</comment>
<comment type="domain">
    <text evidence="1 3">Consists of three domains, a large central CORE domain and two small peripheral domains, NMPbind and LID, which undergo movements during catalysis. The LID domain closes over the site of phosphoryl transfer upon ATP binding. Assembling and dissambling the active center during each catalytic cycle provides an effective means to prevent ATP hydrolysis.</text>
</comment>
<comment type="similarity">
    <text evidence="3">Belongs to the adenylate kinase family. AK1 subfamily.</text>
</comment>
<proteinExistence type="evidence at protein level"/>
<accession>P00569</accession>
<feature type="chain" id="PRO_0000158913" description="Adenylate kinase isoenzyme 1">
    <location>
        <begin position="1"/>
        <end position="194"/>
    </location>
</feature>
<feature type="region of interest" description="NMP" evidence="3">
    <location>
        <begin position="38"/>
        <end position="67"/>
    </location>
</feature>
<feature type="region of interest" description="LID" evidence="3">
    <location>
        <begin position="131"/>
        <end position="141"/>
    </location>
</feature>
<feature type="binding site" evidence="3">
    <location>
        <begin position="18"/>
        <end position="23"/>
    </location>
    <ligand>
        <name>ATP</name>
        <dbReference type="ChEBI" id="CHEBI:30616"/>
    </ligand>
</feature>
<feature type="binding site" evidence="3">
    <location>
        <position position="39"/>
    </location>
    <ligand>
        <name>AMP</name>
        <dbReference type="ChEBI" id="CHEBI:456215"/>
    </ligand>
</feature>
<feature type="binding site" evidence="3">
    <location>
        <position position="44"/>
    </location>
    <ligand>
        <name>AMP</name>
        <dbReference type="ChEBI" id="CHEBI:456215"/>
    </ligand>
</feature>
<feature type="binding site" evidence="3">
    <location>
        <begin position="65"/>
        <end position="67"/>
    </location>
    <ligand>
        <name>AMP</name>
        <dbReference type="ChEBI" id="CHEBI:456215"/>
    </ligand>
</feature>
<feature type="binding site" evidence="3">
    <location>
        <begin position="94"/>
        <end position="97"/>
    </location>
    <ligand>
        <name>AMP</name>
        <dbReference type="ChEBI" id="CHEBI:456215"/>
    </ligand>
</feature>
<feature type="binding site" evidence="3">
    <location>
        <position position="101"/>
    </location>
    <ligand>
        <name>AMP</name>
        <dbReference type="ChEBI" id="CHEBI:456215"/>
    </ligand>
</feature>
<feature type="binding site" evidence="3">
    <location>
        <position position="132"/>
    </location>
    <ligand>
        <name>ATP</name>
        <dbReference type="ChEBI" id="CHEBI:30616"/>
    </ligand>
</feature>
<feature type="binding site" evidence="3">
    <location>
        <position position="138"/>
    </location>
    <ligand>
        <name>AMP</name>
        <dbReference type="ChEBI" id="CHEBI:456215"/>
    </ligand>
</feature>
<feature type="binding site" evidence="3">
    <location>
        <position position="149"/>
    </location>
    <ligand>
        <name>AMP</name>
        <dbReference type="ChEBI" id="CHEBI:456215"/>
    </ligand>
</feature>
<feature type="binding site" evidence="3">
    <location>
        <position position="177"/>
    </location>
    <ligand>
        <name>ATP</name>
        <dbReference type="ChEBI" id="CHEBI:30616"/>
    </ligand>
</feature>
<feature type="modified residue" description="N-acetylmethionine" evidence="3 4">
    <location>
        <position position="1"/>
    </location>
</feature>
<feature type="modified residue" description="Phosphoserine" evidence="1">
    <location>
        <position position="38"/>
    </location>
</feature>
<reference key="1">
    <citation type="journal article" date="1984" name="Biochemistry">
        <title>Studies on adenosine triphosphate transphosphorylases. Amino acid sequence of rabbit muscle ATP-AMP transphosphorylase.</title>
        <authorList>
            <person name="Kuby S.A."/>
            <person name="Palmieri R.H."/>
            <person name="Frischat A."/>
            <person name="Fischer A.H."/>
            <person name="Wu L.H."/>
            <person name="Maland L."/>
            <person name="Manship M."/>
        </authorList>
    </citation>
    <scope>PROTEIN SEQUENCE</scope>
    <scope>ACETYLATION AT MET-1</scope>
</reference>
<name>KAD1_RABIT</name>
<organism>
    <name type="scientific">Oryctolagus cuniculus</name>
    <name type="common">Rabbit</name>
    <dbReference type="NCBI Taxonomy" id="9986"/>
    <lineage>
        <taxon>Eukaryota</taxon>
        <taxon>Metazoa</taxon>
        <taxon>Chordata</taxon>
        <taxon>Craniata</taxon>
        <taxon>Vertebrata</taxon>
        <taxon>Euteleostomi</taxon>
        <taxon>Mammalia</taxon>
        <taxon>Eutheria</taxon>
        <taxon>Euarchontoglires</taxon>
        <taxon>Glires</taxon>
        <taxon>Lagomorpha</taxon>
        <taxon>Leporidae</taxon>
        <taxon>Oryctolagus</taxon>
    </lineage>
</organism>